<organism>
    <name type="scientific">Cupriavidus necator (strain ATCC 17699 / DSM 428 / KCTC 22496 / NCIMB 10442 / H16 / Stanier 337)</name>
    <name type="common">Ralstonia eutropha</name>
    <dbReference type="NCBI Taxonomy" id="381666"/>
    <lineage>
        <taxon>Bacteria</taxon>
        <taxon>Pseudomonadati</taxon>
        <taxon>Pseudomonadota</taxon>
        <taxon>Betaproteobacteria</taxon>
        <taxon>Burkholderiales</taxon>
        <taxon>Burkholderiaceae</taxon>
        <taxon>Cupriavidus</taxon>
    </lineage>
</organism>
<proteinExistence type="inferred from homology"/>
<feature type="chain" id="PRO_1000114824" description="Pyridoxine 5'-phosphate synthase">
    <location>
        <begin position="1"/>
        <end position="260"/>
    </location>
</feature>
<feature type="active site" description="Proton acceptor" evidence="1">
    <location>
        <position position="51"/>
    </location>
</feature>
<feature type="active site" description="Proton acceptor" evidence="1">
    <location>
        <position position="78"/>
    </location>
</feature>
<feature type="active site" description="Proton donor" evidence="1">
    <location>
        <position position="199"/>
    </location>
</feature>
<feature type="binding site" evidence="1">
    <location>
        <position position="15"/>
    </location>
    <ligand>
        <name>3-amino-2-oxopropyl phosphate</name>
        <dbReference type="ChEBI" id="CHEBI:57279"/>
    </ligand>
</feature>
<feature type="binding site" evidence="1">
    <location>
        <begin position="17"/>
        <end position="18"/>
    </location>
    <ligand>
        <name>1-deoxy-D-xylulose 5-phosphate</name>
        <dbReference type="ChEBI" id="CHEBI:57792"/>
    </ligand>
</feature>
<feature type="binding site" evidence="1">
    <location>
        <position position="26"/>
    </location>
    <ligand>
        <name>3-amino-2-oxopropyl phosphate</name>
        <dbReference type="ChEBI" id="CHEBI:57279"/>
    </ligand>
</feature>
<feature type="binding site" evidence="1">
    <location>
        <position position="53"/>
    </location>
    <ligand>
        <name>1-deoxy-D-xylulose 5-phosphate</name>
        <dbReference type="ChEBI" id="CHEBI:57792"/>
    </ligand>
</feature>
<feature type="binding site" evidence="1">
    <location>
        <position position="58"/>
    </location>
    <ligand>
        <name>1-deoxy-D-xylulose 5-phosphate</name>
        <dbReference type="ChEBI" id="CHEBI:57792"/>
    </ligand>
</feature>
<feature type="binding site" evidence="1">
    <location>
        <position position="108"/>
    </location>
    <ligand>
        <name>1-deoxy-D-xylulose 5-phosphate</name>
        <dbReference type="ChEBI" id="CHEBI:57792"/>
    </ligand>
</feature>
<feature type="binding site" evidence="1">
    <location>
        <position position="200"/>
    </location>
    <ligand>
        <name>3-amino-2-oxopropyl phosphate</name>
        <dbReference type="ChEBI" id="CHEBI:57279"/>
    </ligand>
</feature>
<feature type="binding site" evidence="1">
    <location>
        <begin position="221"/>
        <end position="222"/>
    </location>
    <ligand>
        <name>3-amino-2-oxopropyl phosphate</name>
        <dbReference type="ChEBI" id="CHEBI:57279"/>
    </ligand>
</feature>
<feature type="site" description="Transition state stabilizer" evidence="1">
    <location>
        <position position="159"/>
    </location>
</feature>
<reference key="1">
    <citation type="journal article" date="2006" name="Nat. Biotechnol.">
        <title>Genome sequence of the bioplastic-producing 'Knallgas' bacterium Ralstonia eutropha H16.</title>
        <authorList>
            <person name="Pohlmann A."/>
            <person name="Fricke W.F."/>
            <person name="Reinecke F."/>
            <person name="Kusian B."/>
            <person name="Liesegang H."/>
            <person name="Cramm R."/>
            <person name="Eitinger T."/>
            <person name="Ewering C."/>
            <person name="Poetter M."/>
            <person name="Schwartz E."/>
            <person name="Strittmatter A."/>
            <person name="Voss I."/>
            <person name="Gottschalk G."/>
            <person name="Steinbuechel A."/>
            <person name="Friedrich B."/>
            <person name="Bowien B."/>
        </authorList>
    </citation>
    <scope>NUCLEOTIDE SEQUENCE [LARGE SCALE GENOMIC DNA]</scope>
    <source>
        <strain>ATCC 17699 / DSM 428 / KCTC 22496 / NCIMB 10442 / H16 / Stanier 337</strain>
    </source>
</reference>
<keyword id="KW-0963">Cytoplasm</keyword>
<keyword id="KW-0664">Pyridoxine biosynthesis</keyword>
<keyword id="KW-1185">Reference proteome</keyword>
<keyword id="KW-0808">Transferase</keyword>
<accession>Q0K8N6</accession>
<sequence>MIFHANPGVIDLGVNIDHVATLRNARGTVYPDPIRAALLAEQAGADLITLHLREDRRHIRDADVRALRPQLATRMNLECALTQEMLDIACEIRPQDVCLVPERREEVTTEGGLDVAGRFEQVKAACAQLAGAGIRVSLFIDADADQIAAAAACGAPVIELHTGRYADAHTPDEQALEFRRIADGVDAGQKHGLVVNAGHGLHYTNVQPIAALPGIKELNIGHAIVAHAVFAGWENAVREMKAIMVAARLGTRYPAAGAPA</sequence>
<gene>
    <name evidence="1" type="primary">pdxJ</name>
    <name type="ordered locus">H16_A2552</name>
</gene>
<evidence type="ECO:0000255" key="1">
    <source>
        <dbReference type="HAMAP-Rule" id="MF_00279"/>
    </source>
</evidence>
<comment type="function">
    <text evidence="1">Catalyzes the complicated ring closure reaction between the two acyclic compounds 1-deoxy-D-xylulose-5-phosphate (DXP) and 3-amino-2-oxopropyl phosphate (1-amino-acetone-3-phosphate or AAP) to form pyridoxine 5'-phosphate (PNP) and inorganic phosphate.</text>
</comment>
<comment type="catalytic activity">
    <reaction evidence="1">
        <text>3-amino-2-oxopropyl phosphate + 1-deoxy-D-xylulose 5-phosphate = pyridoxine 5'-phosphate + phosphate + 2 H2O + H(+)</text>
        <dbReference type="Rhea" id="RHEA:15265"/>
        <dbReference type="ChEBI" id="CHEBI:15377"/>
        <dbReference type="ChEBI" id="CHEBI:15378"/>
        <dbReference type="ChEBI" id="CHEBI:43474"/>
        <dbReference type="ChEBI" id="CHEBI:57279"/>
        <dbReference type="ChEBI" id="CHEBI:57792"/>
        <dbReference type="ChEBI" id="CHEBI:58589"/>
        <dbReference type="EC" id="2.6.99.2"/>
    </reaction>
</comment>
<comment type="pathway">
    <text evidence="1">Cofactor biosynthesis; pyridoxine 5'-phosphate biosynthesis; pyridoxine 5'-phosphate from D-erythrose 4-phosphate: step 5/5.</text>
</comment>
<comment type="subunit">
    <text evidence="1">Homooctamer; tetramer of dimers.</text>
</comment>
<comment type="subcellular location">
    <subcellularLocation>
        <location evidence="1">Cytoplasm</location>
    </subcellularLocation>
</comment>
<comment type="similarity">
    <text evidence="1">Belongs to the PNP synthase family.</text>
</comment>
<dbReference type="EC" id="2.6.99.2" evidence="1"/>
<dbReference type="EMBL" id="AM260479">
    <property type="protein sequence ID" value="CAJ93635.1"/>
    <property type="molecule type" value="Genomic_DNA"/>
</dbReference>
<dbReference type="RefSeq" id="WP_011615719.1">
    <property type="nucleotide sequence ID" value="NC_008313.1"/>
</dbReference>
<dbReference type="SMR" id="Q0K8N6"/>
<dbReference type="STRING" id="381666.H16_A2552"/>
<dbReference type="KEGG" id="reh:H16_A2552"/>
<dbReference type="PATRIC" id="fig|381666.6.peg.2937"/>
<dbReference type="eggNOG" id="COG0854">
    <property type="taxonomic scope" value="Bacteria"/>
</dbReference>
<dbReference type="HOGENOM" id="CLU_074563_0_0_4"/>
<dbReference type="OrthoDB" id="9806590at2"/>
<dbReference type="UniPathway" id="UPA00244">
    <property type="reaction ID" value="UER00313"/>
</dbReference>
<dbReference type="Proteomes" id="UP000008210">
    <property type="component" value="Chromosome 1"/>
</dbReference>
<dbReference type="GO" id="GO:0005829">
    <property type="term" value="C:cytosol"/>
    <property type="evidence" value="ECO:0007669"/>
    <property type="project" value="TreeGrafter"/>
</dbReference>
<dbReference type="GO" id="GO:0033856">
    <property type="term" value="F:pyridoxine 5'-phosphate synthase activity"/>
    <property type="evidence" value="ECO:0007669"/>
    <property type="project" value="UniProtKB-EC"/>
</dbReference>
<dbReference type="GO" id="GO:0008615">
    <property type="term" value="P:pyridoxine biosynthetic process"/>
    <property type="evidence" value="ECO:0007669"/>
    <property type="project" value="UniProtKB-UniRule"/>
</dbReference>
<dbReference type="CDD" id="cd00003">
    <property type="entry name" value="PNPsynthase"/>
    <property type="match status" value="1"/>
</dbReference>
<dbReference type="FunFam" id="3.20.20.70:FF:000042">
    <property type="entry name" value="Pyridoxine 5'-phosphate synthase"/>
    <property type="match status" value="1"/>
</dbReference>
<dbReference type="Gene3D" id="3.20.20.70">
    <property type="entry name" value="Aldolase class I"/>
    <property type="match status" value="1"/>
</dbReference>
<dbReference type="HAMAP" id="MF_00279">
    <property type="entry name" value="PdxJ"/>
    <property type="match status" value="1"/>
</dbReference>
<dbReference type="InterPro" id="IPR013785">
    <property type="entry name" value="Aldolase_TIM"/>
</dbReference>
<dbReference type="InterPro" id="IPR004569">
    <property type="entry name" value="PyrdxlP_synth_PdxJ"/>
</dbReference>
<dbReference type="InterPro" id="IPR036130">
    <property type="entry name" value="Pyridoxine-5'_phos_synth"/>
</dbReference>
<dbReference type="NCBIfam" id="TIGR00559">
    <property type="entry name" value="pdxJ"/>
    <property type="match status" value="1"/>
</dbReference>
<dbReference type="NCBIfam" id="NF003623">
    <property type="entry name" value="PRK05265.1-1"/>
    <property type="match status" value="1"/>
</dbReference>
<dbReference type="NCBIfam" id="NF003624">
    <property type="entry name" value="PRK05265.1-2"/>
    <property type="match status" value="1"/>
</dbReference>
<dbReference type="NCBIfam" id="NF003625">
    <property type="entry name" value="PRK05265.1-3"/>
    <property type="match status" value="1"/>
</dbReference>
<dbReference type="NCBIfam" id="NF003627">
    <property type="entry name" value="PRK05265.1-5"/>
    <property type="match status" value="1"/>
</dbReference>
<dbReference type="PANTHER" id="PTHR30456">
    <property type="entry name" value="PYRIDOXINE 5'-PHOSPHATE SYNTHASE"/>
    <property type="match status" value="1"/>
</dbReference>
<dbReference type="PANTHER" id="PTHR30456:SF0">
    <property type="entry name" value="PYRIDOXINE 5'-PHOSPHATE SYNTHASE"/>
    <property type="match status" value="1"/>
</dbReference>
<dbReference type="Pfam" id="PF03740">
    <property type="entry name" value="PdxJ"/>
    <property type="match status" value="1"/>
</dbReference>
<dbReference type="SUPFAM" id="SSF63892">
    <property type="entry name" value="Pyridoxine 5'-phosphate synthase"/>
    <property type="match status" value="1"/>
</dbReference>
<name>PDXJ_CUPNH</name>
<protein>
    <recommendedName>
        <fullName evidence="1">Pyridoxine 5'-phosphate synthase</fullName>
        <shortName evidence="1">PNP synthase</shortName>
        <ecNumber evidence="1">2.6.99.2</ecNumber>
    </recommendedName>
</protein>